<feature type="chain" id="PRO_1000058439" description="tRNA dimethylallyltransferase">
    <location>
        <begin position="1"/>
        <end position="291"/>
    </location>
</feature>
<feature type="binding site" evidence="1">
    <location>
        <begin position="17"/>
        <end position="24"/>
    </location>
    <ligand>
        <name>ATP</name>
        <dbReference type="ChEBI" id="CHEBI:30616"/>
    </ligand>
</feature>
<feature type="binding site" evidence="1">
    <location>
        <begin position="19"/>
        <end position="24"/>
    </location>
    <ligand>
        <name>substrate</name>
    </ligand>
</feature>
<feature type="site" description="Interaction with substrate tRNA" evidence="1">
    <location>
        <position position="104"/>
    </location>
</feature>
<feature type="site" description="Interaction with substrate tRNA" evidence="1">
    <location>
        <position position="126"/>
    </location>
</feature>
<evidence type="ECO:0000255" key="1">
    <source>
        <dbReference type="HAMAP-Rule" id="MF_00185"/>
    </source>
</evidence>
<sequence length="291" mass="31839">MLPPLPIPPDRPVLIAGPTASGKSALAAEIVGRDGGVVVNADALQVYDCWRILSARPSVAEEAALPHRLYGHVPRRGIYSAGHWLKEVEAVLREGLRPVIVGGTGLYFSSLTNGLADIPHTPPEMRHEADAFLARAGLSAMVADLDPATAGRIDLRNPARVQRAWEVLRATGRGLADWQAATGAPLLPLAETVALVLRPDRDWLAERIDRRFDLMIEAGALEEARVALADWDPALPSSRAIGAPELVAHLKGERTLDEAIAAAKLASRQYAKRQRTWFRNRMRDWREIRLP</sequence>
<protein>
    <recommendedName>
        <fullName evidence="1">tRNA dimethylallyltransferase</fullName>
        <ecNumber evidence="1">2.5.1.75</ecNumber>
    </recommendedName>
    <alternativeName>
        <fullName evidence="1">Dimethylallyl diphosphate:tRNA dimethylallyltransferase</fullName>
        <shortName evidence="1">DMAPP:tRNA dimethylallyltransferase</shortName>
        <shortName evidence="1">DMATase</shortName>
    </alternativeName>
    <alternativeName>
        <fullName evidence="1">Isopentenyl-diphosphate:tRNA isopentenyltransferase</fullName>
        <shortName evidence="1">IPP transferase</shortName>
        <shortName evidence="1">IPPT</shortName>
        <shortName evidence="1">IPTase</shortName>
    </alternativeName>
</protein>
<reference key="1">
    <citation type="submission" date="2007-04" db="EMBL/GenBank/DDBJ databases">
        <title>Complete sequence of chromosome of Rhodobacter sphaeroides ATCC 17025.</title>
        <authorList>
            <consortium name="US DOE Joint Genome Institute"/>
            <person name="Copeland A."/>
            <person name="Lucas S."/>
            <person name="Lapidus A."/>
            <person name="Barry K."/>
            <person name="Detter J.C."/>
            <person name="Glavina del Rio T."/>
            <person name="Hammon N."/>
            <person name="Israni S."/>
            <person name="Dalin E."/>
            <person name="Tice H."/>
            <person name="Pitluck S."/>
            <person name="Chertkov O."/>
            <person name="Brettin T."/>
            <person name="Bruce D."/>
            <person name="Han C."/>
            <person name="Schmutz J."/>
            <person name="Larimer F."/>
            <person name="Land M."/>
            <person name="Hauser L."/>
            <person name="Kyrpides N."/>
            <person name="Kim E."/>
            <person name="Richardson P."/>
            <person name="Mackenzie C."/>
            <person name="Choudhary M."/>
            <person name="Donohue T.J."/>
            <person name="Kaplan S."/>
        </authorList>
    </citation>
    <scope>NUCLEOTIDE SEQUENCE [LARGE SCALE GENOMIC DNA]</scope>
    <source>
        <strain>ATCC 17025 / ATH 2.4.3</strain>
    </source>
</reference>
<proteinExistence type="inferred from homology"/>
<keyword id="KW-0067">ATP-binding</keyword>
<keyword id="KW-0460">Magnesium</keyword>
<keyword id="KW-0547">Nucleotide-binding</keyword>
<keyword id="KW-0808">Transferase</keyword>
<keyword id="KW-0819">tRNA processing</keyword>
<organism>
    <name type="scientific">Cereibacter sphaeroides (strain ATCC 17025 / ATH 2.4.3)</name>
    <name type="common">Rhodobacter sphaeroides</name>
    <dbReference type="NCBI Taxonomy" id="349102"/>
    <lineage>
        <taxon>Bacteria</taxon>
        <taxon>Pseudomonadati</taxon>
        <taxon>Pseudomonadota</taxon>
        <taxon>Alphaproteobacteria</taxon>
        <taxon>Rhodobacterales</taxon>
        <taxon>Paracoccaceae</taxon>
        <taxon>Cereibacter</taxon>
    </lineage>
</organism>
<name>MIAA_CERS5</name>
<dbReference type="EC" id="2.5.1.75" evidence="1"/>
<dbReference type="EMBL" id="CP000661">
    <property type="protein sequence ID" value="ABP71044.1"/>
    <property type="molecule type" value="Genomic_DNA"/>
</dbReference>
<dbReference type="SMR" id="A4WUI0"/>
<dbReference type="STRING" id="349102.Rsph17025_2154"/>
<dbReference type="KEGG" id="rsq:Rsph17025_2154"/>
<dbReference type="eggNOG" id="COG0324">
    <property type="taxonomic scope" value="Bacteria"/>
</dbReference>
<dbReference type="HOGENOM" id="CLU_032616_0_1_5"/>
<dbReference type="BioCyc" id="RSPH349102:G1G8M-2223-MONOMER"/>
<dbReference type="GO" id="GO:0005524">
    <property type="term" value="F:ATP binding"/>
    <property type="evidence" value="ECO:0007669"/>
    <property type="project" value="UniProtKB-UniRule"/>
</dbReference>
<dbReference type="GO" id="GO:0052381">
    <property type="term" value="F:tRNA dimethylallyltransferase activity"/>
    <property type="evidence" value="ECO:0007669"/>
    <property type="project" value="UniProtKB-UniRule"/>
</dbReference>
<dbReference type="GO" id="GO:0006400">
    <property type="term" value="P:tRNA modification"/>
    <property type="evidence" value="ECO:0007669"/>
    <property type="project" value="TreeGrafter"/>
</dbReference>
<dbReference type="Gene3D" id="1.10.20.140">
    <property type="match status" value="1"/>
</dbReference>
<dbReference type="Gene3D" id="3.40.50.300">
    <property type="entry name" value="P-loop containing nucleotide triphosphate hydrolases"/>
    <property type="match status" value="1"/>
</dbReference>
<dbReference type="HAMAP" id="MF_00185">
    <property type="entry name" value="IPP_trans"/>
    <property type="match status" value="1"/>
</dbReference>
<dbReference type="InterPro" id="IPR039657">
    <property type="entry name" value="Dimethylallyltransferase"/>
</dbReference>
<dbReference type="InterPro" id="IPR018022">
    <property type="entry name" value="IPT"/>
</dbReference>
<dbReference type="InterPro" id="IPR027417">
    <property type="entry name" value="P-loop_NTPase"/>
</dbReference>
<dbReference type="NCBIfam" id="TIGR00174">
    <property type="entry name" value="miaA"/>
    <property type="match status" value="1"/>
</dbReference>
<dbReference type="PANTHER" id="PTHR11088">
    <property type="entry name" value="TRNA DIMETHYLALLYLTRANSFERASE"/>
    <property type="match status" value="1"/>
</dbReference>
<dbReference type="PANTHER" id="PTHR11088:SF60">
    <property type="entry name" value="TRNA DIMETHYLALLYLTRANSFERASE"/>
    <property type="match status" value="1"/>
</dbReference>
<dbReference type="Pfam" id="PF01715">
    <property type="entry name" value="IPPT"/>
    <property type="match status" value="1"/>
</dbReference>
<dbReference type="SUPFAM" id="SSF52540">
    <property type="entry name" value="P-loop containing nucleoside triphosphate hydrolases"/>
    <property type="match status" value="2"/>
</dbReference>
<comment type="function">
    <text evidence="1">Catalyzes the transfer of a dimethylallyl group onto the adenine at position 37 in tRNAs that read codons beginning with uridine, leading to the formation of N6-(dimethylallyl)adenosine (i(6)A).</text>
</comment>
<comment type="catalytic activity">
    <reaction evidence="1">
        <text>adenosine(37) in tRNA + dimethylallyl diphosphate = N(6)-dimethylallyladenosine(37) in tRNA + diphosphate</text>
        <dbReference type="Rhea" id="RHEA:26482"/>
        <dbReference type="Rhea" id="RHEA-COMP:10162"/>
        <dbReference type="Rhea" id="RHEA-COMP:10375"/>
        <dbReference type="ChEBI" id="CHEBI:33019"/>
        <dbReference type="ChEBI" id="CHEBI:57623"/>
        <dbReference type="ChEBI" id="CHEBI:74411"/>
        <dbReference type="ChEBI" id="CHEBI:74415"/>
        <dbReference type="EC" id="2.5.1.75"/>
    </reaction>
</comment>
<comment type="cofactor">
    <cofactor evidence="1">
        <name>Mg(2+)</name>
        <dbReference type="ChEBI" id="CHEBI:18420"/>
    </cofactor>
</comment>
<comment type="subunit">
    <text evidence="1">Monomer.</text>
</comment>
<comment type="similarity">
    <text evidence="1">Belongs to the IPP transferase family.</text>
</comment>
<gene>
    <name evidence="1" type="primary">miaA</name>
    <name type="ordered locus">Rsph17025_2154</name>
</gene>
<accession>A4WUI0</accession>